<gene>
    <name evidence="5" type="primary">PKD1L1-AS1</name>
    <name evidence="5" type="synonym">C7orf69</name>
</gene>
<organism>
    <name type="scientific">Homo sapiens</name>
    <name type="common">Human</name>
    <dbReference type="NCBI Taxonomy" id="9606"/>
    <lineage>
        <taxon>Eukaryota</taxon>
        <taxon>Metazoa</taxon>
        <taxon>Chordata</taxon>
        <taxon>Craniata</taxon>
        <taxon>Vertebrata</taxon>
        <taxon>Euteleostomi</taxon>
        <taxon>Mammalia</taxon>
        <taxon>Eutheria</taxon>
        <taxon>Euarchontoglires</taxon>
        <taxon>Primates</taxon>
        <taxon>Haplorrhini</taxon>
        <taxon>Catarrhini</taxon>
        <taxon>Hominidae</taxon>
        <taxon>Homo</taxon>
    </lineage>
</organism>
<name>CG069_HUMAN</name>
<comment type="subcellular location">
    <subcellularLocation>
        <location evidence="4">Secreted</location>
    </subcellularLocation>
</comment>
<comment type="caution">
    <text evidence="4">Product of a dubious CDS prediction.</text>
</comment>
<accession>Q9H7B7</accession>
<accession>A4D2F1</accession>
<accession>Q14CN7</accession>
<accession>Q75MJ5</accession>
<sequence>MGFHFCIWIIFLLPPPCKKCLSPPTMNLRPPKSCGNVFYWVLVLNSGLLYKFCQTIKCRANWRPARAPRGWNEATERHQERRTQMETEMGGISTTYWHRLCTCTDRRAEKLVMDGNNCWFHK</sequence>
<evidence type="ECO:0000255" key="1"/>
<evidence type="ECO:0000269" key="2">
    <source>
    </source>
</evidence>
<evidence type="ECO:0000269" key="3">
    <source ref="4"/>
</evidence>
<evidence type="ECO:0000305" key="4"/>
<evidence type="ECO:0000312" key="5">
    <source>
        <dbReference type="HGNC" id="HGNC:21911"/>
    </source>
</evidence>
<keyword id="KW-1185">Reference proteome</keyword>
<keyword id="KW-0964">Secreted</keyword>
<keyword id="KW-0732">Signal</keyword>
<dbReference type="EMBL" id="AK024728">
    <property type="protein sequence ID" value="BAB14977.1"/>
    <property type="molecule type" value="mRNA"/>
</dbReference>
<dbReference type="EMBL" id="AC019066">
    <property type="protein sequence ID" value="AAS07564.1"/>
    <property type="molecule type" value="Genomic_DNA"/>
</dbReference>
<dbReference type="EMBL" id="AC069282">
    <property type="status" value="NOT_ANNOTATED_CDS"/>
    <property type="molecule type" value="Genomic_DNA"/>
</dbReference>
<dbReference type="EMBL" id="CH236958">
    <property type="protein sequence ID" value="EAL23806.1"/>
    <property type="molecule type" value="Genomic_DNA"/>
</dbReference>
<dbReference type="EMBL" id="CH471128">
    <property type="protein sequence ID" value="EAW61008.1"/>
    <property type="molecule type" value="Genomic_DNA"/>
</dbReference>
<dbReference type="EMBL" id="BC113679">
    <property type="protein sequence ID" value="AAI13680.1"/>
    <property type="molecule type" value="mRNA"/>
</dbReference>
<dbReference type="EMBL" id="BC113681">
    <property type="protein sequence ID" value="AAI13682.1"/>
    <property type="molecule type" value="mRNA"/>
</dbReference>
<dbReference type="RefSeq" id="NP_001289556.1">
    <property type="nucleotide sequence ID" value="NM_001302627.1"/>
</dbReference>
<dbReference type="RefSeq" id="NP_079307.2">
    <property type="nucleotide sequence ID" value="NM_025031.2"/>
</dbReference>
<dbReference type="BioGRID" id="123113">
    <property type="interactions" value="8"/>
</dbReference>
<dbReference type="FunCoup" id="Q9H7B7">
    <property type="interactions" value="7"/>
</dbReference>
<dbReference type="IntAct" id="Q9H7B7">
    <property type="interactions" value="8"/>
</dbReference>
<dbReference type="iPTMnet" id="Q9H7B7"/>
<dbReference type="PhosphoSitePlus" id="Q9H7B7"/>
<dbReference type="BioMuta" id="HGNC:21911"/>
<dbReference type="DMDM" id="296439409"/>
<dbReference type="MassIVE" id="Q9H7B7"/>
<dbReference type="PaxDb" id="9606-ENSP00000258776"/>
<dbReference type="AGR" id="HGNC:21911"/>
<dbReference type="GeneCards" id="PKD1L1-AS1"/>
<dbReference type="HGNC" id="HGNC:21911">
    <property type="gene designation" value="PKD1L1-AS1"/>
</dbReference>
<dbReference type="MalaCards" id="PKD1L1-AS1"/>
<dbReference type="neXtProt" id="NX_Q9H7B7"/>
<dbReference type="eggNOG" id="ENOG502TE69">
    <property type="taxonomic scope" value="Eukaryota"/>
</dbReference>
<dbReference type="InParanoid" id="Q9H7B7"/>
<dbReference type="PAN-GO" id="Q9H7B7">
    <property type="GO annotations" value="0 GO annotations based on evolutionary models"/>
</dbReference>
<dbReference type="PhylomeDB" id="Q9H7B7"/>
<dbReference type="TreeFam" id="TF340496"/>
<dbReference type="PathwayCommons" id="Q9H7B7"/>
<dbReference type="SignaLink" id="Q9H7B7"/>
<dbReference type="BioGRID-ORCS" id="80099">
    <property type="hits" value="16 hits in 748 CRISPR screens"/>
</dbReference>
<dbReference type="GenomeRNAi" id="80099"/>
<dbReference type="Pharos" id="Q9H7B7">
    <property type="development level" value="Tdark"/>
</dbReference>
<dbReference type="Proteomes" id="UP000005640">
    <property type="component" value="Unplaced"/>
</dbReference>
<dbReference type="RNAct" id="Q9H7B7">
    <property type="molecule type" value="protein"/>
</dbReference>
<dbReference type="GO" id="GO:0005576">
    <property type="term" value="C:extracellular region"/>
    <property type="evidence" value="ECO:0007669"/>
    <property type="project" value="UniProtKB-SubCell"/>
</dbReference>
<feature type="signal peptide" evidence="1">
    <location>
        <begin position="1"/>
        <end position="20"/>
    </location>
</feature>
<feature type="chain" id="PRO_0000339306" description="Putative uncharacterized protein PKD1L1-AS1">
    <location>
        <begin position="21"/>
        <end position="122"/>
    </location>
</feature>
<feature type="sequence variant" id="VAR_043942" description="In dbSNP:rs9719534." evidence="2 3">
    <original>K</original>
    <variation>E</variation>
    <location>
        <position position="32"/>
    </location>
</feature>
<feature type="sequence conflict" description="In Ref. 1; BAB14977." evidence="4" ref="1">
    <original>G</original>
    <variation>E</variation>
    <location>
        <position position="47"/>
    </location>
</feature>
<feature type="sequence conflict" description="In Ref. 1; BAB14977." evidence="4" ref="1">
    <original>A</original>
    <variation>V</variation>
    <location>
        <position position="65"/>
    </location>
</feature>
<protein>
    <recommendedName>
        <fullName evidence="4">Putative uncharacterized protein PKD1L1-AS1</fullName>
    </recommendedName>
    <alternativeName>
        <fullName evidence="5">PKD1L1 antisense RNA 1</fullName>
    </alternativeName>
</protein>
<proteinExistence type="uncertain"/>
<reference key="1">
    <citation type="journal article" date="2004" name="Nat. Genet.">
        <title>Complete sequencing and characterization of 21,243 full-length human cDNAs.</title>
        <authorList>
            <person name="Ota T."/>
            <person name="Suzuki Y."/>
            <person name="Nishikawa T."/>
            <person name="Otsuki T."/>
            <person name="Sugiyama T."/>
            <person name="Irie R."/>
            <person name="Wakamatsu A."/>
            <person name="Hayashi K."/>
            <person name="Sato H."/>
            <person name="Nagai K."/>
            <person name="Kimura K."/>
            <person name="Makita H."/>
            <person name="Sekine M."/>
            <person name="Obayashi M."/>
            <person name="Nishi T."/>
            <person name="Shibahara T."/>
            <person name="Tanaka T."/>
            <person name="Ishii S."/>
            <person name="Yamamoto J."/>
            <person name="Saito K."/>
            <person name="Kawai Y."/>
            <person name="Isono Y."/>
            <person name="Nakamura Y."/>
            <person name="Nagahari K."/>
            <person name="Murakami K."/>
            <person name="Yasuda T."/>
            <person name="Iwayanagi T."/>
            <person name="Wagatsuma M."/>
            <person name="Shiratori A."/>
            <person name="Sudo H."/>
            <person name="Hosoiri T."/>
            <person name="Kaku Y."/>
            <person name="Kodaira H."/>
            <person name="Kondo H."/>
            <person name="Sugawara M."/>
            <person name="Takahashi M."/>
            <person name="Kanda K."/>
            <person name="Yokoi T."/>
            <person name="Furuya T."/>
            <person name="Kikkawa E."/>
            <person name="Omura Y."/>
            <person name="Abe K."/>
            <person name="Kamihara K."/>
            <person name="Katsuta N."/>
            <person name="Sato K."/>
            <person name="Tanikawa M."/>
            <person name="Yamazaki M."/>
            <person name="Ninomiya K."/>
            <person name="Ishibashi T."/>
            <person name="Yamashita H."/>
            <person name="Murakawa K."/>
            <person name="Fujimori K."/>
            <person name="Tanai H."/>
            <person name="Kimata M."/>
            <person name="Watanabe M."/>
            <person name="Hiraoka S."/>
            <person name="Chiba Y."/>
            <person name="Ishida S."/>
            <person name="Ono Y."/>
            <person name="Takiguchi S."/>
            <person name="Watanabe S."/>
            <person name="Yosida M."/>
            <person name="Hotuta T."/>
            <person name="Kusano J."/>
            <person name="Kanehori K."/>
            <person name="Takahashi-Fujii A."/>
            <person name="Hara H."/>
            <person name="Tanase T.-O."/>
            <person name="Nomura Y."/>
            <person name="Togiya S."/>
            <person name="Komai F."/>
            <person name="Hara R."/>
            <person name="Takeuchi K."/>
            <person name="Arita M."/>
            <person name="Imose N."/>
            <person name="Musashino K."/>
            <person name="Yuuki H."/>
            <person name="Oshima A."/>
            <person name="Sasaki N."/>
            <person name="Aotsuka S."/>
            <person name="Yoshikawa Y."/>
            <person name="Matsunawa H."/>
            <person name="Ichihara T."/>
            <person name="Shiohata N."/>
            <person name="Sano S."/>
            <person name="Moriya S."/>
            <person name="Momiyama H."/>
            <person name="Satoh N."/>
            <person name="Takami S."/>
            <person name="Terashima Y."/>
            <person name="Suzuki O."/>
            <person name="Nakagawa S."/>
            <person name="Senoh A."/>
            <person name="Mizoguchi H."/>
            <person name="Goto Y."/>
            <person name="Shimizu F."/>
            <person name="Wakebe H."/>
            <person name="Hishigaki H."/>
            <person name="Watanabe T."/>
            <person name="Sugiyama A."/>
            <person name="Takemoto M."/>
            <person name="Kawakami B."/>
            <person name="Yamazaki M."/>
            <person name="Watanabe K."/>
            <person name="Kumagai A."/>
            <person name="Itakura S."/>
            <person name="Fukuzumi Y."/>
            <person name="Fujimori Y."/>
            <person name="Komiyama M."/>
            <person name="Tashiro H."/>
            <person name="Tanigami A."/>
            <person name="Fujiwara T."/>
            <person name="Ono T."/>
            <person name="Yamada K."/>
            <person name="Fujii Y."/>
            <person name="Ozaki K."/>
            <person name="Hirao M."/>
            <person name="Ohmori Y."/>
            <person name="Kawabata A."/>
            <person name="Hikiji T."/>
            <person name="Kobatake N."/>
            <person name="Inagaki H."/>
            <person name="Ikema Y."/>
            <person name="Okamoto S."/>
            <person name="Okitani R."/>
            <person name="Kawakami T."/>
            <person name="Noguchi S."/>
            <person name="Itoh T."/>
            <person name="Shigeta K."/>
            <person name="Senba T."/>
            <person name="Matsumura K."/>
            <person name="Nakajima Y."/>
            <person name="Mizuno T."/>
            <person name="Morinaga M."/>
            <person name="Sasaki M."/>
            <person name="Togashi T."/>
            <person name="Oyama M."/>
            <person name="Hata H."/>
            <person name="Watanabe M."/>
            <person name="Komatsu T."/>
            <person name="Mizushima-Sugano J."/>
            <person name="Satoh T."/>
            <person name="Shirai Y."/>
            <person name="Takahashi Y."/>
            <person name="Nakagawa K."/>
            <person name="Okumura K."/>
            <person name="Nagase T."/>
            <person name="Nomura N."/>
            <person name="Kikuchi H."/>
            <person name="Masuho Y."/>
            <person name="Yamashita R."/>
            <person name="Nakai K."/>
            <person name="Yada T."/>
            <person name="Nakamura Y."/>
            <person name="Ohara O."/>
            <person name="Isogai T."/>
            <person name="Sugano S."/>
        </authorList>
    </citation>
    <scope>NUCLEOTIDE SEQUENCE [LARGE SCALE MRNA]</scope>
    <source>
        <tissue>Smooth muscle</tissue>
    </source>
</reference>
<reference key="2">
    <citation type="journal article" date="2003" name="Nature">
        <title>The DNA sequence of human chromosome 7.</title>
        <authorList>
            <person name="Hillier L.W."/>
            <person name="Fulton R.S."/>
            <person name="Fulton L.A."/>
            <person name="Graves T.A."/>
            <person name="Pepin K.H."/>
            <person name="Wagner-McPherson C."/>
            <person name="Layman D."/>
            <person name="Maas J."/>
            <person name="Jaeger S."/>
            <person name="Walker R."/>
            <person name="Wylie K."/>
            <person name="Sekhon M."/>
            <person name="Becker M.C."/>
            <person name="O'Laughlin M.D."/>
            <person name="Schaller M.E."/>
            <person name="Fewell G.A."/>
            <person name="Delehaunty K.D."/>
            <person name="Miner T.L."/>
            <person name="Nash W.E."/>
            <person name="Cordes M."/>
            <person name="Du H."/>
            <person name="Sun H."/>
            <person name="Edwards J."/>
            <person name="Bradshaw-Cordum H."/>
            <person name="Ali J."/>
            <person name="Andrews S."/>
            <person name="Isak A."/>
            <person name="Vanbrunt A."/>
            <person name="Nguyen C."/>
            <person name="Du F."/>
            <person name="Lamar B."/>
            <person name="Courtney L."/>
            <person name="Kalicki J."/>
            <person name="Ozersky P."/>
            <person name="Bielicki L."/>
            <person name="Scott K."/>
            <person name="Holmes A."/>
            <person name="Harkins R."/>
            <person name="Harris A."/>
            <person name="Strong C.M."/>
            <person name="Hou S."/>
            <person name="Tomlinson C."/>
            <person name="Dauphin-Kohlberg S."/>
            <person name="Kozlowicz-Reilly A."/>
            <person name="Leonard S."/>
            <person name="Rohlfing T."/>
            <person name="Rock S.M."/>
            <person name="Tin-Wollam A.-M."/>
            <person name="Abbott A."/>
            <person name="Minx P."/>
            <person name="Maupin R."/>
            <person name="Strowmatt C."/>
            <person name="Latreille P."/>
            <person name="Miller N."/>
            <person name="Johnson D."/>
            <person name="Murray J."/>
            <person name="Woessner J.P."/>
            <person name="Wendl M.C."/>
            <person name="Yang S.-P."/>
            <person name="Schultz B.R."/>
            <person name="Wallis J.W."/>
            <person name="Spieth J."/>
            <person name="Bieri T.A."/>
            <person name="Nelson J.O."/>
            <person name="Berkowicz N."/>
            <person name="Wohldmann P.E."/>
            <person name="Cook L.L."/>
            <person name="Hickenbotham M.T."/>
            <person name="Eldred J."/>
            <person name="Williams D."/>
            <person name="Bedell J.A."/>
            <person name="Mardis E.R."/>
            <person name="Clifton S.W."/>
            <person name="Chissoe S.L."/>
            <person name="Marra M.A."/>
            <person name="Raymond C."/>
            <person name="Haugen E."/>
            <person name="Gillett W."/>
            <person name="Zhou Y."/>
            <person name="James R."/>
            <person name="Phelps K."/>
            <person name="Iadanoto S."/>
            <person name="Bubb K."/>
            <person name="Simms E."/>
            <person name="Levy R."/>
            <person name="Clendenning J."/>
            <person name="Kaul R."/>
            <person name="Kent W.J."/>
            <person name="Furey T.S."/>
            <person name="Baertsch R.A."/>
            <person name="Brent M.R."/>
            <person name="Keibler E."/>
            <person name="Flicek P."/>
            <person name="Bork P."/>
            <person name="Suyama M."/>
            <person name="Bailey J.A."/>
            <person name="Portnoy M.E."/>
            <person name="Torrents D."/>
            <person name="Chinwalla A.T."/>
            <person name="Gish W.R."/>
            <person name="Eddy S.R."/>
            <person name="McPherson J.D."/>
            <person name="Olson M.V."/>
            <person name="Eichler E.E."/>
            <person name="Green E.D."/>
            <person name="Waterston R.H."/>
            <person name="Wilson R.K."/>
        </authorList>
    </citation>
    <scope>NUCLEOTIDE SEQUENCE [LARGE SCALE GENOMIC DNA]</scope>
</reference>
<reference key="3">
    <citation type="journal article" date="2003" name="Science">
        <title>Human chromosome 7: DNA sequence and biology.</title>
        <authorList>
            <person name="Scherer S.W."/>
            <person name="Cheung J."/>
            <person name="MacDonald J.R."/>
            <person name="Osborne L.R."/>
            <person name="Nakabayashi K."/>
            <person name="Herbrick J.-A."/>
            <person name="Carson A.R."/>
            <person name="Parker-Katiraee L."/>
            <person name="Skaug J."/>
            <person name="Khaja R."/>
            <person name="Zhang J."/>
            <person name="Hudek A.K."/>
            <person name="Li M."/>
            <person name="Haddad M."/>
            <person name="Duggan G.E."/>
            <person name="Fernandez B.A."/>
            <person name="Kanematsu E."/>
            <person name="Gentles S."/>
            <person name="Christopoulos C.C."/>
            <person name="Choufani S."/>
            <person name="Kwasnicka D."/>
            <person name="Zheng X.H."/>
            <person name="Lai Z."/>
            <person name="Nusskern D.R."/>
            <person name="Zhang Q."/>
            <person name="Gu Z."/>
            <person name="Lu F."/>
            <person name="Zeesman S."/>
            <person name="Nowaczyk M.J."/>
            <person name="Teshima I."/>
            <person name="Chitayat D."/>
            <person name="Shuman C."/>
            <person name="Weksberg R."/>
            <person name="Zackai E.H."/>
            <person name="Grebe T.A."/>
            <person name="Cox S.R."/>
            <person name="Kirkpatrick S.J."/>
            <person name="Rahman N."/>
            <person name="Friedman J.M."/>
            <person name="Heng H.H.Q."/>
            <person name="Pelicci P.G."/>
            <person name="Lo-Coco F."/>
            <person name="Belloni E."/>
            <person name="Shaffer L.G."/>
            <person name="Pober B."/>
            <person name="Morton C.C."/>
            <person name="Gusella J.F."/>
            <person name="Bruns G.A.P."/>
            <person name="Korf B.R."/>
            <person name="Quade B.J."/>
            <person name="Ligon A.H."/>
            <person name="Ferguson H."/>
            <person name="Higgins A.W."/>
            <person name="Leach N.T."/>
            <person name="Herrick S.R."/>
            <person name="Lemyre E."/>
            <person name="Farra C.G."/>
            <person name="Kim H.-G."/>
            <person name="Summers A.M."/>
            <person name="Gripp K.W."/>
            <person name="Roberts W."/>
            <person name="Szatmari P."/>
            <person name="Winsor E.J.T."/>
            <person name="Grzeschik K.-H."/>
            <person name="Teebi A."/>
            <person name="Minassian B.A."/>
            <person name="Kere J."/>
            <person name="Armengol L."/>
            <person name="Pujana M.A."/>
            <person name="Estivill X."/>
            <person name="Wilson M.D."/>
            <person name="Koop B.F."/>
            <person name="Tosi S."/>
            <person name="Moore G.E."/>
            <person name="Boright A.P."/>
            <person name="Zlotorynski E."/>
            <person name="Kerem B."/>
            <person name="Kroisel P.M."/>
            <person name="Petek E."/>
            <person name="Oscier D.G."/>
            <person name="Mould S.J."/>
            <person name="Doehner H."/>
            <person name="Doehner K."/>
            <person name="Rommens J.M."/>
            <person name="Vincent J.B."/>
            <person name="Venter J.C."/>
            <person name="Li P.W."/>
            <person name="Mural R.J."/>
            <person name="Adams M.D."/>
            <person name="Tsui L.-C."/>
        </authorList>
    </citation>
    <scope>NUCLEOTIDE SEQUENCE [LARGE SCALE GENOMIC DNA]</scope>
    <scope>VARIANT GLU-32</scope>
</reference>
<reference key="4">
    <citation type="submission" date="2005-09" db="EMBL/GenBank/DDBJ databases">
        <authorList>
            <person name="Mural R.J."/>
            <person name="Istrail S."/>
            <person name="Sutton G.G."/>
            <person name="Florea L."/>
            <person name="Halpern A.L."/>
            <person name="Mobarry C.M."/>
            <person name="Lippert R."/>
            <person name="Walenz B."/>
            <person name="Shatkay H."/>
            <person name="Dew I."/>
            <person name="Miller J.R."/>
            <person name="Flanigan M.J."/>
            <person name="Edwards N.J."/>
            <person name="Bolanos R."/>
            <person name="Fasulo D."/>
            <person name="Halldorsson B.V."/>
            <person name="Hannenhalli S."/>
            <person name="Turner R."/>
            <person name="Yooseph S."/>
            <person name="Lu F."/>
            <person name="Nusskern D.R."/>
            <person name="Shue B.C."/>
            <person name="Zheng X.H."/>
            <person name="Zhong F."/>
            <person name="Delcher A.L."/>
            <person name="Huson D.H."/>
            <person name="Kravitz S.A."/>
            <person name="Mouchard L."/>
            <person name="Reinert K."/>
            <person name="Remington K.A."/>
            <person name="Clark A.G."/>
            <person name="Waterman M.S."/>
            <person name="Eichler E.E."/>
            <person name="Adams M.D."/>
            <person name="Hunkapiller M.W."/>
            <person name="Myers E.W."/>
            <person name="Venter J.C."/>
        </authorList>
    </citation>
    <scope>NUCLEOTIDE SEQUENCE [LARGE SCALE GENOMIC DNA]</scope>
    <scope>VARIANT GLU-32</scope>
</reference>
<reference key="5">
    <citation type="journal article" date="2004" name="Genome Res.">
        <title>The status, quality, and expansion of the NIH full-length cDNA project: the Mammalian Gene Collection (MGC).</title>
        <authorList>
            <consortium name="The MGC Project Team"/>
        </authorList>
    </citation>
    <scope>NUCLEOTIDE SEQUENCE [LARGE SCALE MRNA]</scope>
</reference>